<name>BPT_ACIAD</name>
<organism>
    <name type="scientific">Acinetobacter baylyi (strain ATCC 33305 / BD413 / ADP1)</name>
    <dbReference type="NCBI Taxonomy" id="62977"/>
    <lineage>
        <taxon>Bacteria</taxon>
        <taxon>Pseudomonadati</taxon>
        <taxon>Pseudomonadota</taxon>
        <taxon>Gammaproteobacteria</taxon>
        <taxon>Moraxellales</taxon>
        <taxon>Moraxellaceae</taxon>
        <taxon>Acinetobacter</taxon>
    </lineage>
</organism>
<evidence type="ECO:0000255" key="1">
    <source>
        <dbReference type="HAMAP-Rule" id="MF_00689"/>
    </source>
</evidence>
<sequence>MKSYQPKSLLNDLQYYITPPHDCSYLDNKSARMVFLDPIHRIDVVTLSELSRVGFRRSGDFVYRPECHLCRQCLSCRVPVHDFNMNSLQKKAWKRNQDLRMSIVPTHAATSVHYQLYERYINERHADGDMFPPSLDQFEKFLVHSCTESFFLELWKDDRLICVSTCDLMDDGLSAVYTFFDPDENRRSLGVFAILKQLEYVKSIDLDYLYLGYWVPHSQKMNYKSQYIPLELLLDGQWRRLNRALSQEEISQLGESLMTILPSEWNSMIIK</sequence>
<gene>
    <name evidence="1" type="primary">bpt</name>
    <name type="ordered locus">ACIAD0888</name>
</gene>
<protein>
    <recommendedName>
        <fullName evidence="1">Aspartate/glutamate leucyltransferase</fullName>
        <ecNumber evidence="1">2.3.2.29</ecNumber>
    </recommendedName>
</protein>
<proteinExistence type="inferred from homology"/>
<feature type="chain" id="PRO_0000195093" description="Aspartate/glutamate leucyltransferase">
    <location>
        <begin position="1"/>
        <end position="271"/>
    </location>
</feature>
<keyword id="KW-0012">Acyltransferase</keyword>
<keyword id="KW-0963">Cytoplasm</keyword>
<keyword id="KW-0808">Transferase</keyword>
<reference key="1">
    <citation type="journal article" date="2004" name="Nucleic Acids Res.">
        <title>Unique features revealed by the genome sequence of Acinetobacter sp. ADP1, a versatile and naturally transformation competent bacterium.</title>
        <authorList>
            <person name="Barbe V."/>
            <person name="Vallenet D."/>
            <person name="Fonknechten N."/>
            <person name="Kreimeyer A."/>
            <person name="Oztas S."/>
            <person name="Labarre L."/>
            <person name="Cruveiller S."/>
            <person name="Robert C."/>
            <person name="Duprat S."/>
            <person name="Wincker P."/>
            <person name="Ornston L.N."/>
            <person name="Weissenbach J."/>
            <person name="Marliere P."/>
            <person name="Cohen G.N."/>
            <person name="Medigue C."/>
        </authorList>
    </citation>
    <scope>NUCLEOTIDE SEQUENCE [LARGE SCALE GENOMIC DNA]</scope>
    <source>
        <strain>ATCC 33305 / BD413 / ADP1</strain>
    </source>
</reference>
<comment type="function">
    <text evidence="1">Functions in the N-end rule pathway of protein degradation where it conjugates Leu from its aminoacyl-tRNA to the N-termini of proteins containing an N-terminal aspartate or glutamate.</text>
</comment>
<comment type="catalytic activity">
    <reaction evidence="1">
        <text>N-terminal L-glutamyl-[protein] + L-leucyl-tRNA(Leu) = N-terminal L-leucyl-L-glutamyl-[protein] + tRNA(Leu) + H(+)</text>
        <dbReference type="Rhea" id="RHEA:50412"/>
        <dbReference type="Rhea" id="RHEA-COMP:9613"/>
        <dbReference type="Rhea" id="RHEA-COMP:9622"/>
        <dbReference type="Rhea" id="RHEA-COMP:12664"/>
        <dbReference type="Rhea" id="RHEA-COMP:12668"/>
        <dbReference type="ChEBI" id="CHEBI:15378"/>
        <dbReference type="ChEBI" id="CHEBI:64721"/>
        <dbReference type="ChEBI" id="CHEBI:78442"/>
        <dbReference type="ChEBI" id="CHEBI:78494"/>
        <dbReference type="ChEBI" id="CHEBI:133041"/>
        <dbReference type="EC" id="2.3.2.29"/>
    </reaction>
</comment>
<comment type="catalytic activity">
    <reaction evidence="1">
        <text>N-terminal L-aspartyl-[protein] + L-leucyl-tRNA(Leu) = N-terminal L-leucyl-L-aspartyl-[protein] + tRNA(Leu) + H(+)</text>
        <dbReference type="Rhea" id="RHEA:50420"/>
        <dbReference type="Rhea" id="RHEA-COMP:9613"/>
        <dbReference type="Rhea" id="RHEA-COMP:9622"/>
        <dbReference type="Rhea" id="RHEA-COMP:12669"/>
        <dbReference type="Rhea" id="RHEA-COMP:12674"/>
        <dbReference type="ChEBI" id="CHEBI:15378"/>
        <dbReference type="ChEBI" id="CHEBI:64720"/>
        <dbReference type="ChEBI" id="CHEBI:78442"/>
        <dbReference type="ChEBI" id="CHEBI:78494"/>
        <dbReference type="ChEBI" id="CHEBI:133042"/>
        <dbReference type="EC" id="2.3.2.29"/>
    </reaction>
</comment>
<comment type="subcellular location">
    <subcellularLocation>
        <location evidence="1">Cytoplasm</location>
    </subcellularLocation>
</comment>
<comment type="similarity">
    <text evidence="1">Belongs to the R-transferase family. Bpt subfamily.</text>
</comment>
<accession>Q6FDS2</accession>
<dbReference type="EC" id="2.3.2.29" evidence="1"/>
<dbReference type="EMBL" id="CR543861">
    <property type="protein sequence ID" value="CAG67786.1"/>
    <property type="molecule type" value="Genomic_DNA"/>
</dbReference>
<dbReference type="RefSeq" id="WP_004922110.1">
    <property type="nucleotide sequence ID" value="NC_005966.1"/>
</dbReference>
<dbReference type="SMR" id="Q6FDS2"/>
<dbReference type="STRING" id="202950.GCA_001485005_02636"/>
<dbReference type="GeneID" id="45233348"/>
<dbReference type="KEGG" id="aci:ACIAD0888"/>
<dbReference type="eggNOG" id="COG2935">
    <property type="taxonomic scope" value="Bacteria"/>
</dbReference>
<dbReference type="HOGENOM" id="CLU_077607_0_0_6"/>
<dbReference type="OrthoDB" id="9782022at2"/>
<dbReference type="BioCyc" id="ASP62977:ACIAD_RS04100-MONOMER"/>
<dbReference type="Proteomes" id="UP000000430">
    <property type="component" value="Chromosome"/>
</dbReference>
<dbReference type="GO" id="GO:0005737">
    <property type="term" value="C:cytoplasm"/>
    <property type="evidence" value="ECO:0007669"/>
    <property type="project" value="UniProtKB-SubCell"/>
</dbReference>
<dbReference type="GO" id="GO:0004057">
    <property type="term" value="F:arginyl-tRNA--protein transferase activity"/>
    <property type="evidence" value="ECO:0007669"/>
    <property type="project" value="InterPro"/>
</dbReference>
<dbReference type="GO" id="GO:0008914">
    <property type="term" value="F:leucyl-tRNA--protein transferase activity"/>
    <property type="evidence" value="ECO:0007669"/>
    <property type="project" value="UniProtKB-UniRule"/>
</dbReference>
<dbReference type="GO" id="GO:0071596">
    <property type="term" value="P:ubiquitin-dependent protein catabolic process via the N-end rule pathway"/>
    <property type="evidence" value="ECO:0007669"/>
    <property type="project" value="InterPro"/>
</dbReference>
<dbReference type="HAMAP" id="MF_00689">
    <property type="entry name" value="Bpt"/>
    <property type="match status" value="1"/>
</dbReference>
<dbReference type="InterPro" id="IPR016181">
    <property type="entry name" value="Acyl_CoA_acyltransferase"/>
</dbReference>
<dbReference type="InterPro" id="IPR017138">
    <property type="entry name" value="Asp_Glu_LeuTrfase"/>
</dbReference>
<dbReference type="InterPro" id="IPR030700">
    <property type="entry name" value="N-end_Aminoacyl_Trfase"/>
</dbReference>
<dbReference type="InterPro" id="IPR007472">
    <property type="entry name" value="N-end_Aminoacyl_Trfase_C"/>
</dbReference>
<dbReference type="InterPro" id="IPR007471">
    <property type="entry name" value="N-end_Aminoacyl_Trfase_N"/>
</dbReference>
<dbReference type="NCBIfam" id="NF002341">
    <property type="entry name" value="PRK01305.1-1"/>
    <property type="match status" value="1"/>
</dbReference>
<dbReference type="NCBIfam" id="NF002342">
    <property type="entry name" value="PRK01305.1-3"/>
    <property type="match status" value="1"/>
</dbReference>
<dbReference type="NCBIfam" id="NF002346">
    <property type="entry name" value="PRK01305.2-3"/>
    <property type="match status" value="1"/>
</dbReference>
<dbReference type="PANTHER" id="PTHR21367">
    <property type="entry name" value="ARGININE-TRNA-PROTEIN TRANSFERASE 1"/>
    <property type="match status" value="1"/>
</dbReference>
<dbReference type="PANTHER" id="PTHR21367:SF1">
    <property type="entry name" value="ARGINYL-TRNA--PROTEIN TRANSFERASE 1"/>
    <property type="match status" value="1"/>
</dbReference>
<dbReference type="Pfam" id="PF04377">
    <property type="entry name" value="ATE_C"/>
    <property type="match status" value="1"/>
</dbReference>
<dbReference type="Pfam" id="PF04376">
    <property type="entry name" value="ATE_N"/>
    <property type="match status" value="1"/>
</dbReference>
<dbReference type="PIRSF" id="PIRSF037208">
    <property type="entry name" value="ATE_pro_prd"/>
    <property type="match status" value="1"/>
</dbReference>
<dbReference type="SUPFAM" id="SSF55729">
    <property type="entry name" value="Acyl-CoA N-acyltransferases (Nat)"/>
    <property type="match status" value="1"/>
</dbReference>